<evidence type="ECO:0000255" key="1">
    <source>
        <dbReference type="HAMAP-Rule" id="MF_00016"/>
    </source>
</evidence>
<comment type="function">
    <text evidence="1">The RuvA-RuvB-RuvC complex processes Holliday junction (HJ) DNA during genetic recombination and DNA repair, while the RuvA-RuvB complex plays an important role in the rescue of blocked DNA replication forks via replication fork reversal (RFR). RuvA specifically binds to HJ cruciform DNA, conferring on it an open structure. The RuvB hexamer acts as an ATP-dependent pump, pulling dsDNA into and through the RuvAB complex. RuvB forms 2 homohexamers on either side of HJ DNA bound by 1 or 2 RuvA tetramers; 4 subunits per hexamer contact DNA at a time. Coordinated motions by a converter formed by DNA-disengaged RuvB subunits stimulates ATP hydrolysis and nucleotide exchange. Immobilization of the converter enables RuvB to convert the ATP-contained energy into a lever motion, pulling 2 nucleotides of DNA out of the RuvA tetramer per ATP hydrolyzed, thus driving DNA branch migration. The RuvB motors rotate together with the DNA substrate, which together with the progressing nucleotide cycle form the mechanistic basis for DNA recombination by continuous HJ branch migration. Branch migration allows RuvC to scan DNA until it finds its consensus sequence, where it cleaves and resolves cruciform DNA.</text>
</comment>
<comment type="catalytic activity">
    <reaction evidence="1">
        <text>ATP + H2O = ADP + phosphate + H(+)</text>
        <dbReference type="Rhea" id="RHEA:13065"/>
        <dbReference type="ChEBI" id="CHEBI:15377"/>
        <dbReference type="ChEBI" id="CHEBI:15378"/>
        <dbReference type="ChEBI" id="CHEBI:30616"/>
        <dbReference type="ChEBI" id="CHEBI:43474"/>
        <dbReference type="ChEBI" id="CHEBI:456216"/>
    </reaction>
</comment>
<comment type="subunit">
    <text evidence="1">Homohexamer. Forms an RuvA(8)-RuvB(12)-Holliday junction (HJ) complex. HJ DNA is sandwiched between 2 RuvA tetramers; dsDNA enters through RuvA and exits via RuvB. An RuvB hexamer assembles on each DNA strand where it exits the tetramer. Each RuvB hexamer is contacted by two RuvA subunits (via domain III) on 2 adjacent RuvB subunits; this complex drives branch migration. In the full resolvosome a probable DNA-RuvA(4)-RuvB(12)-RuvC(2) complex forms which resolves the HJ.</text>
</comment>
<comment type="subcellular location">
    <subcellularLocation>
        <location evidence="1">Cytoplasm</location>
    </subcellularLocation>
</comment>
<comment type="domain">
    <text evidence="1">Has 3 domains, the large (RuvB-L) and small ATPase (RuvB-S) domains and the C-terminal head (RuvB-H) domain. The head domain binds DNA, while the ATPase domains jointly bind ATP, ADP or are empty depending on the state of the subunit in the translocation cycle. During a single DNA translocation step the structure of each domain remains the same, but their relative positions change.</text>
</comment>
<comment type="similarity">
    <text evidence="1">Belongs to the RuvB family.</text>
</comment>
<proteinExistence type="inferred from homology"/>
<sequence>MIEADRLISAGATIAEDVADRAIRPKLLAEYVGQPQVRSQMEIFIQAAKRRGDALDHLLIFGPPGLGKTTLANIVANEMGVNLRTTSGPVLEKAGDLAAMLTNLEPHDVLFIDEIHRLSPVVEEVLYPAMEDYQLDIMIGEGPAARSIKIDLPPFTLIGATTRAGSLTSPLRDRFGIVQRLEFYQVPDLQHIVGRSARHMGLEMSDDGALEVARRARGTPRIANRLLRRVRDFAEVKHDGAISAEIAAQALDMLNVDAEGFDYMDRKLLLAVIDKFFGGPVGLDNLAAAIGEERETIEDVLEPYLIQQGFLQRTPRGRMATVRAWNHFGITPPEMP</sequence>
<gene>
    <name evidence="1" type="primary">ruvB</name>
    <name type="ordered locus">SPAB_01272</name>
</gene>
<keyword id="KW-0067">ATP-binding</keyword>
<keyword id="KW-0963">Cytoplasm</keyword>
<keyword id="KW-0227">DNA damage</keyword>
<keyword id="KW-0233">DNA recombination</keyword>
<keyword id="KW-0234">DNA repair</keyword>
<keyword id="KW-0238">DNA-binding</keyword>
<keyword id="KW-0378">Hydrolase</keyword>
<keyword id="KW-0547">Nucleotide-binding</keyword>
<protein>
    <recommendedName>
        <fullName evidence="1">Holliday junction branch migration complex subunit RuvB</fullName>
        <ecNumber evidence="1">3.6.4.-</ecNumber>
    </recommendedName>
</protein>
<organism>
    <name type="scientific">Salmonella paratyphi B (strain ATCC BAA-1250 / SPB7)</name>
    <dbReference type="NCBI Taxonomy" id="1016998"/>
    <lineage>
        <taxon>Bacteria</taxon>
        <taxon>Pseudomonadati</taxon>
        <taxon>Pseudomonadota</taxon>
        <taxon>Gammaproteobacteria</taxon>
        <taxon>Enterobacterales</taxon>
        <taxon>Enterobacteriaceae</taxon>
        <taxon>Salmonella</taxon>
    </lineage>
</organism>
<name>RUVB_SALPB</name>
<reference key="1">
    <citation type="submission" date="2007-11" db="EMBL/GenBank/DDBJ databases">
        <authorList>
            <consortium name="The Salmonella enterica serovar Paratyphi B Genome Sequencing Project"/>
            <person name="McClelland M."/>
            <person name="Sanderson E.K."/>
            <person name="Porwollik S."/>
            <person name="Spieth J."/>
            <person name="Clifton W.S."/>
            <person name="Fulton R."/>
            <person name="Cordes M."/>
            <person name="Wollam A."/>
            <person name="Shah N."/>
            <person name="Pepin K."/>
            <person name="Bhonagiri V."/>
            <person name="Nash W."/>
            <person name="Johnson M."/>
            <person name="Thiruvilangam P."/>
            <person name="Wilson R."/>
        </authorList>
    </citation>
    <scope>NUCLEOTIDE SEQUENCE [LARGE SCALE GENOMIC DNA]</scope>
    <source>
        <strain>ATCC BAA-1250 / SPB7</strain>
    </source>
</reference>
<accession>A9MUX4</accession>
<dbReference type="EC" id="3.6.4.-" evidence="1"/>
<dbReference type="EMBL" id="CP000886">
    <property type="protein sequence ID" value="ABX66684.1"/>
    <property type="molecule type" value="Genomic_DNA"/>
</dbReference>
<dbReference type="RefSeq" id="WP_000568508.1">
    <property type="nucleotide sequence ID" value="NC_010102.1"/>
</dbReference>
<dbReference type="SMR" id="A9MUX4"/>
<dbReference type="KEGG" id="spq:SPAB_01272"/>
<dbReference type="PATRIC" id="fig|1016998.12.peg.1199"/>
<dbReference type="HOGENOM" id="CLU_055599_1_0_6"/>
<dbReference type="BioCyc" id="SENT1016998:SPAB_RS05280-MONOMER"/>
<dbReference type="Proteomes" id="UP000008556">
    <property type="component" value="Chromosome"/>
</dbReference>
<dbReference type="GO" id="GO:0005737">
    <property type="term" value="C:cytoplasm"/>
    <property type="evidence" value="ECO:0007669"/>
    <property type="project" value="UniProtKB-SubCell"/>
</dbReference>
<dbReference type="GO" id="GO:0048476">
    <property type="term" value="C:Holliday junction resolvase complex"/>
    <property type="evidence" value="ECO:0007669"/>
    <property type="project" value="UniProtKB-UniRule"/>
</dbReference>
<dbReference type="GO" id="GO:0005524">
    <property type="term" value="F:ATP binding"/>
    <property type="evidence" value="ECO:0007669"/>
    <property type="project" value="UniProtKB-UniRule"/>
</dbReference>
<dbReference type="GO" id="GO:0016887">
    <property type="term" value="F:ATP hydrolysis activity"/>
    <property type="evidence" value="ECO:0007669"/>
    <property type="project" value="InterPro"/>
</dbReference>
<dbReference type="GO" id="GO:0000400">
    <property type="term" value="F:four-way junction DNA binding"/>
    <property type="evidence" value="ECO:0007669"/>
    <property type="project" value="UniProtKB-UniRule"/>
</dbReference>
<dbReference type="GO" id="GO:0009378">
    <property type="term" value="F:four-way junction helicase activity"/>
    <property type="evidence" value="ECO:0007669"/>
    <property type="project" value="InterPro"/>
</dbReference>
<dbReference type="GO" id="GO:0006310">
    <property type="term" value="P:DNA recombination"/>
    <property type="evidence" value="ECO:0007669"/>
    <property type="project" value="UniProtKB-UniRule"/>
</dbReference>
<dbReference type="GO" id="GO:0006281">
    <property type="term" value="P:DNA repair"/>
    <property type="evidence" value="ECO:0007669"/>
    <property type="project" value="UniProtKB-UniRule"/>
</dbReference>
<dbReference type="CDD" id="cd00009">
    <property type="entry name" value="AAA"/>
    <property type="match status" value="1"/>
</dbReference>
<dbReference type="FunFam" id="1.10.10.10:FF:000086">
    <property type="entry name" value="Holliday junction ATP-dependent DNA helicase RuvB"/>
    <property type="match status" value="1"/>
</dbReference>
<dbReference type="FunFam" id="1.10.8.60:FF:000023">
    <property type="entry name" value="Holliday junction ATP-dependent DNA helicase RuvB"/>
    <property type="match status" value="1"/>
</dbReference>
<dbReference type="FunFam" id="3.40.50.300:FF:000073">
    <property type="entry name" value="Holliday junction ATP-dependent DNA helicase RuvB"/>
    <property type="match status" value="1"/>
</dbReference>
<dbReference type="Gene3D" id="1.10.8.60">
    <property type="match status" value="1"/>
</dbReference>
<dbReference type="Gene3D" id="3.40.50.300">
    <property type="entry name" value="P-loop containing nucleotide triphosphate hydrolases"/>
    <property type="match status" value="1"/>
</dbReference>
<dbReference type="Gene3D" id="1.10.10.10">
    <property type="entry name" value="Winged helix-like DNA-binding domain superfamily/Winged helix DNA-binding domain"/>
    <property type="match status" value="1"/>
</dbReference>
<dbReference type="HAMAP" id="MF_00016">
    <property type="entry name" value="DNA_HJ_migration_RuvB"/>
    <property type="match status" value="1"/>
</dbReference>
<dbReference type="InterPro" id="IPR003593">
    <property type="entry name" value="AAA+_ATPase"/>
</dbReference>
<dbReference type="InterPro" id="IPR041445">
    <property type="entry name" value="AAA_lid_4"/>
</dbReference>
<dbReference type="InterPro" id="IPR004605">
    <property type="entry name" value="DNA_helicase_Holl-junc_RuvB"/>
</dbReference>
<dbReference type="InterPro" id="IPR027417">
    <property type="entry name" value="P-loop_NTPase"/>
</dbReference>
<dbReference type="InterPro" id="IPR008824">
    <property type="entry name" value="RuvB-like_N"/>
</dbReference>
<dbReference type="InterPro" id="IPR008823">
    <property type="entry name" value="RuvB_C"/>
</dbReference>
<dbReference type="InterPro" id="IPR036388">
    <property type="entry name" value="WH-like_DNA-bd_sf"/>
</dbReference>
<dbReference type="InterPro" id="IPR036390">
    <property type="entry name" value="WH_DNA-bd_sf"/>
</dbReference>
<dbReference type="NCBIfam" id="NF000868">
    <property type="entry name" value="PRK00080.1"/>
    <property type="match status" value="1"/>
</dbReference>
<dbReference type="NCBIfam" id="TIGR00635">
    <property type="entry name" value="ruvB"/>
    <property type="match status" value="1"/>
</dbReference>
<dbReference type="PANTHER" id="PTHR42848">
    <property type="match status" value="1"/>
</dbReference>
<dbReference type="PANTHER" id="PTHR42848:SF1">
    <property type="entry name" value="HOLLIDAY JUNCTION BRANCH MIGRATION COMPLEX SUBUNIT RUVB"/>
    <property type="match status" value="1"/>
</dbReference>
<dbReference type="Pfam" id="PF17864">
    <property type="entry name" value="AAA_lid_4"/>
    <property type="match status" value="1"/>
</dbReference>
<dbReference type="Pfam" id="PF05491">
    <property type="entry name" value="RuvB_C"/>
    <property type="match status" value="1"/>
</dbReference>
<dbReference type="Pfam" id="PF05496">
    <property type="entry name" value="RuvB_N"/>
    <property type="match status" value="1"/>
</dbReference>
<dbReference type="SMART" id="SM00382">
    <property type="entry name" value="AAA"/>
    <property type="match status" value="1"/>
</dbReference>
<dbReference type="SUPFAM" id="SSF52540">
    <property type="entry name" value="P-loop containing nucleoside triphosphate hydrolases"/>
    <property type="match status" value="1"/>
</dbReference>
<dbReference type="SUPFAM" id="SSF46785">
    <property type="entry name" value="Winged helix' DNA-binding domain"/>
    <property type="match status" value="1"/>
</dbReference>
<feature type="chain" id="PRO_1000074098" description="Holliday junction branch migration complex subunit RuvB">
    <location>
        <begin position="1"/>
        <end position="336"/>
    </location>
</feature>
<feature type="region of interest" description="Large ATPase domain (RuvB-L)" evidence="1">
    <location>
        <begin position="4"/>
        <end position="184"/>
    </location>
</feature>
<feature type="region of interest" description="Small ATPAse domain (RuvB-S)" evidence="1">
    <location>
        <begin position="185"/>
        <end position="255"/>
    </location>
</feature>
<feature type="region of interest" description="Head domain (RuvB-H)" evidence="1">
    <location>
        <begin position="258"/>
        <end position="336"/>
    </location>
</feature>
<feature type="binding site" evidence="1">
    <location>
        <position position="23"/>
    </location>
    <ligand>
        <name>ATP</name>
        <dbReference type="ChEBI" id="CHEBI:30616"/>
    </ligand>
</feature>
<feature type="binding site" evidence="1">
    <location>
        <position position="24"/>
    </location>
    <ligand>
        <name>ATP</name>
        <dbReference type="ChEBI" id="CHEBI:30616"/>
    </ligand>
</feature>
<feature type="binding site" evidence="1">
    <location>
        <position position="65"/>
    </location>
    <ligand>
        <name>ATP</name>
        <dbReference type="ChEBI" id="CHEBI:30616"/>
    </ligand>
</feature>
<feature type="binding site" evidence="1">
    <location>
        <position position="68"/>
    </location>
    <ligand>
        <name>ATP</name>
        <dbReference type="ChEBI" id="CHEBI:30616"/>
    </ligand>
</feature>
<feature type="binding site" evidence="1">
    <location>
        <position position="69"/>
    </location>
    <ligand>
        <name>ATP</name>
        <dbReference type="ChEBI" id="CHEBI:30616"/>
    </ligand>
</feature>
<feature type="binding site" evidence="1">
    <location>
        <position position="69"/>
    </location>
    <ligand>
        <name>Mg(2+)</name>
        <dbReference type="ChEBI" id="CHEBI:18420"/>
    </ligand>
</feature>
<feature type="binding site" evidence="1">
    <location>
        <position position="70"/>
    </location>
    <ligand>
        <name>ATP</name>
        <dbReference type="ChEBI" id="CHEBI:30616"/>
    </ligand>
</feature>
<feature type="binding site" evidence="1">
    <location>
        <begin position="131"/>
        <end position="133"/>
    </location>
    <ligand>
        <name>ATP</name>
        <dbReference type="ChEBI" id="CHEBI:30616"/>
    </ligand>
</feature>
<feature type="binding site" evidence="1">
    <location>
        <position position="174"/>
    </location>
    <ligand>
        <name>ATP</name>
        <dbReference type="ChEBI" id="CHEBI:30616"/>
    </ligand>
</feature>
<feature type="binding site" evidence="1">
    <location>
        <position position="184"/>
    </location>
    <ligand>
        <name>ATP</name>
        <dbReference type="ChEBI" id="CHEBI:30616"/>
    </ligand>
</feature>
<feature type="binding site" evidence="1">
    <location>
        <position position="221"/>
    </location>
    <ligand>
        <name>ATP</name>
        <dbReference type="ChEBI" id="CHEBI:30616"/>
    </ligand>
</feature>
<feature type="binding site" evidence="1">
    <location>
        <position position="294"/>
    </location>
    <ligand>
        <name>DNA</name>
        <dbReference type="ChEBI" id="CHEBI:16991"/>
    </ligand>
</feature>
<feature type="binding site" evidence="1">
    <location>
        <position position="313"/>
    </location>
    <ligand>
        <name>DNA</name>
        <dbReference type="ChEBI" id="CHEBI:16991"/>
    </ligand>
</feature>
<feature type="binding site" evidence="1">
    <location>
        <position position="318"/>
    </location>
    <ligand>
        <name>DNA</name>
        <dbReference type="ChEBI" id="CHEBI:16991"/>
    </ligand>
</feature>